<comment type="catalytic activity">
    <reaction>
        <text>Hydrolysis of the 6-sulfate groups of the N-acetyl-D-galactosamine 6-sulfate units of chondroitin sulfate and of the D-galactose 6-sulfate units of keratan sulfate.</text>
        <dbReference type="EC" id="3.1.6.4"/>
    </reaction>
</comment>
<comment type="cofactor">
    <cofactor evidence="1">
        <name>Ca(2+)</name>
        <dbReference type="ChEBI" id="CHEBI:29108"/>
    </cofactor>
    <text evidence="1">Binds 1 Ca(2+) ion per subunit.</text>
</comment>
<comment type="subunit">
    <text evidence="1">Homodimer.</text>
</comment>
<comment type="subcellular location">
    <subcellularLocation>
        <location evidence="1">Lysosome</location>
    </subcellularLocation>
</comment>
<comment type="PTM">
    <text evidence="1">The conversion to 3-oxoalanine (also known as C-formylglycine, FGly), of a serine or cysteine residue in prokaryotes and of a cysteine residue in eukaryotes, is critical for catalytic activity.</text>
</comment>
<comment type="similarity">
    <text evidence="4">Belongs to the sulfatase family.</text>
</comment>
<evidence type="ECO:0000250" key="1"/>
<evidence type="ECO:0000250" key="2">
    <source>
        <dbReference type="UniProtKB" id="P15289"/>
    </source>
</evidence>
<evidence type="ECO:0000255" key="3"/>
<evidence type="ECO:0000305" key="4"/>
<gene>
    <name type="primary">Galns</name>
</gene>
<keyword id="KW-0106">Calcium</keyword>
<keyword id="KW-0903">Direct protein sequencing</keyword>
<keyword id="KW-1015">Disulfide bond</keyword>
<keyword id="KW-0325">Glycoprotein</keyword>
<keyword id="KW-0378">Hydrolase</keyword>
<keyword id="KW-0458">Lysosome</keyword>
<keyword id="KW-0479">Metal-binding</keyword>
<keyword id="KW-1185">Reference proteome</keyword>
<keyword id="KW-0732">Signal</keyword>
<organism>
    <name type="scientific">Rattus norvegicus</name>
    <name type="common">Rat</name>
    <dbReference type="NCBI Taxonomy" id="10116"/>
    <lineage>
        <taxon>Eukaryota</taxon>
        <taxon>Metazoa</taxon>
        <taxon>Chordata</taxon>
        <taxon>Craniata</taxon>
        <taxon>Vertebrata</taxon>
        <taxon>Euteleostomi</taxon>
        <taxon>Mammalia</taxon>
        <taxon>Eutheria</taxon>
        <taxon>Euarchontoglires</taxon>
        <taxon>Glires</taxon>
        <taxon>Rodentia</taxon>
        <taxon>Myomorpha</taxon>
        <taxon>Muroidea</taxon>
        <taxon>Muridae</taxon>
        <taxon>Murinae</taxon>
        <taxon>Rattus</taxon>
    </lineage>
</organism>
<dbReference type="EC" id="3.1.6.4"/>
<dbReference type="EMBL" id="AC134009">
    <property type="status" value="NOT_ANNOTATED_CDS"/>
    <property type="molecule type" value="Genomic_DNA"/>
</dbReference>
<dbReference type="EMBL" id="BN000741">
    <property type="protein sequence ID" value="CAI84987.1"/>
    <property type="molecule type" value="mRNA"/>
</dbReference>
<dbReference type="RefSeq" id="NP_001041316.1">
    <property type="nucleotide sequence ID" value="NM_001047851.3"/>
</dbReference>
<dbReference type="SMR" id="Q32KJ6"/>
<dbReference type="FunCoup" id="Q32KJ6">
    <property type="interactions" value="480"/>
</dbReference>
<dbReference type="STRING" id="10116.ENSRNOP00000019528"/>
<dbReference type="GlyCosmos" id="Q32KJ6">
    <property type="glycosylation" value="2 sites, No reported glycans"/>
</dbReference>
<dbReference type="GlyGen" id="Q32KJ6">
    <property type="glycosylation" value="2 sites"/>
</dbReference>
<dbReference type="PhosphoSitePlus" id="Q32KJ6"/>
<dbReference type="PaxDb" id="10116-ENSRNOP00000019528"/>
<dbReference type="Ensembl" id="ENSRNOT00000019528.5">
    <property type="protein sequence ID" value="ENSRNOP00000019528.3"/>
    <property type="gene ID" value="ENSRNOG00000014461.8"/>
</dbReference>
<dbReference type="GeneID" id="292073"/>
<dbReference type="KEGG" id="rno:292073"/>
<dbReference type="UCSC" id="RGD:1565391">
    <property type="organism name" value="rat"/>
</dbReference>
<dbReference type="AGR" id="RGD:1565391"/>
<dbReference type="CTD" id="2588"/>
<dbReference type="RGD" id="1565391">
    <property type="gene designation" value="Galns"/>
</dbReference>
<dbReference type="eggNOG" id="KOG3867">
    <property type="taxonomic scope" value="Eukaryota"/>
</dbReference>
<dbReference type="GeneTree" id="ENSGT00940000157787"/>
<dbReference type="HOGENOM" id="CLU_006332_13_5_1"/>
<dbReference type="InParanoid" id="Q32KJ6"/>
<dbReference type="OMA" id="VIVQQHK"/>
<dbReference type="OrthoDB" id="103349at2759"/>
<dbReference type="PhylomeDB" id="Q32KJ6"/>
<dbReference type="TreeFam" id="TF314186"/>
<dbReference type="Reactome" id="R-RNO-2022857">
    <property type="pathway name" value="Keratan sulfate degradation"/>
</dbReference>
<dbReference type="Reactome" id="R-RNO-6798695">
    <property type="pathway name" value="Neutrophil degranulation"/>
</dbReference>
<dbReference type="PRO" id="PR:Q32KJ6"/>
<dbReference type="Proteomes" id="UP000002494">
    <property type="component" value="Chromosome 19"/>
</dbReference>
<dbReference type="Bgee" id="ENSRNOG00000014461">
    <property type="expression patterns" value="Expressed in skeletal muscle tissue and 18 other cell types or tissues"/>
</dbReference>
<dbReference type="ExpressionAtlas" id="Q32KJ6">
    <property type="expression patterns" value="baseline and differential"/>
</dbReference>
<dbReference type="GO" id="GO:0005764">
    <property type="term" value="C:lysosome"/>
    <property type="evidence" value="ECO:0000266"/>
    <property type="project" value="RGD"/>
</dbReference>
<dbReference type="GO" id="GO:0004065">
    <property type="term" value="F:arylsulfatase activity"/>
    <property type="evidence" value="ECO:0000318"/>
    <property type="project" value="GO_Central"/>
</dbReference>
<dbReference type="GO" id="GO:0046872">
    <property type="term" value="F:metal ion binding"/>
    <property type="evidence" value="ECO:0007669"/>
    <property type="project" value="UniProtKB-KW"/>
</dbReference>
<dbReference type="GO" id="GO:0043890">
    <property type="term" value="F:N-acetylgalactosamine-6-sulfatase activity"/>
    <property type="evidence" value="ECO:0000266"/>
    <property type="project" value="RGD"/>
</dbReference>
<dbReference type="GO" id="GO:0008484">
    <property type="term" value="F:sulfuric ester hydrolase activity"/>
    <property type="evidence" value="ECO:0000266"/>
    <property type="project" value="RGD"/>
</dbReference>
<dbReference type="CDD" id="cd16157">
    <property type="entry name" value="GALNS"/>
    <property type="match status" value="1"/>
</dbReference>
<dbReference type="FunFam" id="3.30.1120.10:FF:000004">
    <property type="entry name" value="Galactosamine (N-acetyl)-6-sulfatase"/>
    <property type="match status" value="1"/>
</dbReference>
<dbReference type="FunFam" id="3.40.720.10:FF:000021">
    <property type="entry name" value="Galactosamine (N-acetyl)-6-sulfatase"/>
    <property type="match status" value="1"/>
</dbReference>
<dbReference type="Gene3D" id="3.30.1120.10">
    <property type="match status" value="1"/>
</dbReference>
<dbReference type="Gene3D" id="3.40.720.10">
    <property type="entry name" value="Alkaline Phosphatase, subunit A"/>
    <property type="match status" value="1"/>
</dbReference>
<dbReference type="InterPro" id="IPR017850">
    <property type="entry name" value="Alkaline_phosphatase_core_sf"/>
</dbReference>
<dbReference type="InterPro" id="IPR035626">
    <property type="entry name" value="GALNS"/>
</dbReference>
<dbReference type="InterPro" id="IPR050738">
    <property type="entry name" value="Sulfatase"/>
</dbReference>
<dbReference type="InterPro" id="IPR024607">
    <property type="entry name" value="Sulfatase_CS"/>
</dbReference>
<dbReference type="InterPro" id="IPR000917">
    <property type="entry name" value="Sulfatase_N"/>
</dbReference>
<dbReference type="PANTHER" id="PTHR42693">
    <property type="entry name" value="ARYLSULFATASE FAMILY MEMBER"/>
    <property type="match status" value="1"/>
</dbReference>
<dbReference type="PANTHER" id="PTHR42693:SF47">
    <property type="entry name" value="N-ACETYLGALACTOSAMINE-6-SULFATASE"/>
    <property type="match status" value="1"/>
</dbReference>
<dbReference type="Pfam" id="PF00884">
    <property type="entry name" value="Sulfatase"/>
    <property type="match status" value="1"/>
</dbReference>
<dbReference type="Pfam" id="PF14707">
    <property type="entry name" value="Sulfatase_C"/>
    <property type="match status" value="1"/>
</dbReference>
<dbReference type="SUPFAM" id="SSF53649">
    <property type="entry name" value="Alkaline phosphatase-like"/>
    <property type="match status" value="1"/>
</dbReference>
<dbReference type="PROSITE" id="PS00523">
    <property type="entry name" value="SULFATASE_1"/>
    <property type="match status" value="1"/>
</dbReference>
<proteinExistence type="evidence at protein level"/>
<reference key="1">
    <citation type="journal article" date="2004" name="Nature">
        <title>Genome sequence of the Brown Norway rat yields insights into mammalian evolution.</title>
        <authorList>
            <person name="Gibbs R.A."/>
            <person name="Weinstock G.M."/>
            <person name="Metzker M.L."/>
            <person name="Muzny D.M."/>
            <person name="Sodergren E.J."/>
            <person name="Scherer S."/>
            <person name="Scott G."/>
            <person name="Steffen D."/>
            <person name="Worley K.C."/>
            <person name="Burch P.E."/>
            <person name="Okwuonu G."/>
            <person name="Hines S."/>
            <person name="Lewis L."/>
            <person name="Deramo C."/>
            <person name="Delgado O."/>
            <person name="Dugan-Rocha S."/>
            <person name="Miner G."/>
            <person name="Morgan M."/>
            <person name="Hawes A."/>
            <person name="Gill R."/>
            <person name="Holt R.A."/>
            <person name="Adams M.D."/>
            <person name="Amanatides P.G."/>
            <person name="Baden-Tillson H."/>
            <person name="Barnstead M."/>
            <person name="Chin S."/>
            <person name="Evans C.A."/>
            <person name="Ferriera S."/>
            <person name="Fosler C."/>
            <person name="Glodek A."/>
            <person name="Gu Z."/>
            <person name="Jennings D."/>
            <person name="Kraft C.L."/>
            <person name="Nguyen T."/>
            <person name="Pfannkoch C.M."/>
            <person name="Sitter C."/>
            <person name="Sutton G.G."/>
            <person name="Venter J.C."/>
            <person name="Woodage T."/>
            <person name="Smith D."/>
            <person name="Lee H.-M."/>
            <person name="Gustafson E."/>
            <person name="Cahill P."/>
            <person name="Kana A."/>
            <person name="Doucette-Stamm L."/>
            <person name="Weinstock K."/>
            <person name="Fechtel K."/>
            <person name="Weiss R.B."/>
            <person name="Dunn D.M."/>
            <person name="Green E.D."/>
            <person name="Blakesley R.W."/>
            <person name="Bouffard G.G."/>
            <person name="De Jong P.J."/>
            <person name="Osoegawa K."/>
            <person name="Zhu B."/>
            <person name="Marra M."/>
            <person name="Schein J."/>
            <person name="Bosdet I."/>
            <person name="Fjell C."/>
            <person name="Jones S."/>
            <person name="Krzywinski M."/>
            <person name="Mathewson C."/>
            <person name="Siddiqui A."/>
            <person name="Wye N."/>
            <person name="McPherson J."/>
            <person name="Zhao S."/>
            <person name="Fraser C.M."/>
            <person name="Shetty J."/>
            <person name="Shatsman S."/>
            <person name="Geer K."/>
            <person name="Chen Y."/>
            <person name="Abramzon S."/>
            <person name="Nierman W.C."/>
            <person name="Havlak P.H."/>
            <person name="Chen R."/>
            <person name="Durbin K.J."/>
            <person name="Egan A."/>
            <person name="Ren Y."/>
            <person name="Song X.-Z."/>
            <person name="Li B."/>
            <person name="Liu Y."/>
            <person name="Qin X."/>
            <person name="Cawley S."/>
            <person name="Cooney A.J."/>
            <person name="D'Souza L.M."/>
            <person name="Martin K."/>
            <person name="Wu J.Q."/>
            <person name="Gonzalez-Garay M.L."/>
            <person name="Jackson A.R."/>
            <person name="Kalafus K.J."/>
            <person name="McLeod M.P."/>
            <person name="Milosavljevic A."/>
            <person name="Virk D."/>
            <person name="Volkov A."/>
            <person name="Wheeler D.A."/>
            <person name="Zhang Z."/>
            <person name="Bailey J.A."/>
            <person name="Eichler E.E."/>
            <person name="Tuzun E."/>
            <person name="Birney E."/>
            <person name="Mongin E."/>
            <person name="Ureta-Vidal A."/>
            <person name="Woodwark C."/>
            <person name="Zdobnov E."/>
            <person name="Bork P."/>
            <person name="Suyama M."/>
            <person name="Torrents D."/>
            <person name="Alexandersson M."/>
            <person name="Trask B.J."/>
            <person name="Young J.M."/>
            <person name="Huang H."/>
            <person name="Wang H."/>
            <person name="Xing H."/>
            <person name="Daniels S."/>
            <person name="Gietzen D."/>
            <person name="Schmidt J."/>
            <person name="Stevens K."/>
            <person name="Vitt U."/>
            <person name="Wingrove J."/>
            <person name="Camara F."/>
            <person name="Mar Alba M."/>
            <person name="Abril J.F."/>
            <person name="Guigo R."/>
            <person name="Smit A."/>
            <person name="Dubchak I."/>
            <person name="Rubin E.M."/>
            <person name="Couronne O."/>
            <person name="Poliakov A."/>
            <person name="Huebner N."/>
            <person name="Ganten D."/>
            <person name="Goesele C."/>
            <person name="Hummel O."/>
            <person name="Kreitler T."/>
            <person name="Lee Y.-A."/>
            <person name="Monti J."/>
            <person name="Schulz H."/>
            <person name="Zimdahl H."/>
            <person name="Himmelbauer H."/>
            <person name="Lehrach H."/>
            <person name="Jacob H.J."/>
            <person name="Bromberg S."/>
            <person name="Gullings-Handley J."/>
            <person name="Jensen-Seaman M.I."/>
            <person name="Kwitek A.E."/>
            <person name="Lazar J."/>
            <person name="Pasko D."/>
            <person name="Tonellato P.J."/>
            <person name="Twigger S."/>
            <person name="Ponting C.P."/>
            <person name="Duarte J.M."/>
            <person name="Rice S."/>
            <person name="Goodstadt L."/>
            <person name="Beatson S.A."/>
            <person name="Emes R.D."/>
            <person name="Winter E.E."/>
            <person name="Webber C."/>
            <person name="Brandt P."/>
            <person name="Nyakatura G."/>
            <person name="Adetobi M."/>
            <person name="Chiaromonte F."/>
            <person name="Elnitski L."/>
            <person name="Eswara P."/>
            <person name="Hardison R.C."/>
            <person name="Hou M."/>
            <person name="Kolbe D."/>
            <person name="Makova K."/>
            <person name="Miller W."/>
            <person name="Nekrutenko A."/>
            <person name="Riemer C."/>
            <person name="Schwartz S."/>
            <person name="Taylor J."/>
            <person name="Yang S."/>
            <person name="Zhang Y."/>
            <person name="Lindpaintner K."/>
            <person name="Andrews T.D."/>
            <person name="Caccamo M."/>
            <person name="Clamp M."/>
            <person name="Clarke L."/>
            <person name="Curwen V."/>
            <person name="Durbin R.M."/>
            <person name="Eyras E."/>
            <person name="Searle S.M."/>
            <person name="Cooper G.M."/>
            <person name="Batzoglou S."/>
            <person name="Brudno M."/>
            <person name="Sidow A."/>
            <person name="Stone E.A."/>
            <person name="Payseur B.A."/>
            <person name="Bourque G."/>
            <person name="Lopez-Otin C."/>
            <person name="Puente X.S."/>
            <person name="Chakrabarti K."/>
            <person name="Chatterji S."/>
            <person name="Dewey C."/>
            <person name="Pachter L."/>
            <person name="Bray N."/>
            <person name="Yap V.B."/>
            <person name="Caspi A."/>
            <person name="Tesler G."/>
            <person name="Pevzner P.A."/>
            <person name="Haussler D."/>
            <person name="Roskin K.M."/>
            <person name="Baertsch R."/>
            <person name="Clawson H."/>
            <person name="Furey T.S."/>
            <person name="Hinrichs A.S."/>
            <person name="Karolchik D."/>
            <person name="Kent W.J."/>
            <person name="Rosenbloom K.R."/>
            <person name="Trumbower H."/>
            <person name="Weirauch M."/>
            <person name="Cooper D.N."/>
            <person name="Stenson P.D."/>
            <person name="Ma B."/>
            <person name="Brent M."/>
            <person name="Arumugam M."/>
            <person name="Shteynberg D."/>
            <person name="Copley R.R."/>
            <person name="Taylor M.S."/>
            <person name="Riethman H."/>
            <person name="Mudunuri U."/>
            <person name="Peterson J."/>
            <person name="Guyer M."/>
            <person name="Felsenfeld A."/>
            <person name="Old S."/>
            <person name="Mockrin S."/>
            <person name="Collins F.S."/>
        </authorList>
    </citation>
    <scope>NUCLEOTIDE SEQUENCE [LARGE SCALE GENOMIC DNA]</scope>
    <source>
        <strain>Brown Norway</strain>
    </source>
</reference>
<reference key="2">
    <citation type="submission" date="2007-09" db="UniProtKB">
        <authorList>
            <person name="Lubec G."/>
            <person name="Kang S.U."/>
            <person name="Lubec S."/>
        </authorList>
    </citation>
    <scope>PROTEIN SEQUENCE OF 85-91</scope>
    <scope>IDENTIFICATION BY MASS SPECTROMETRY</scope>
    <source>
        <strain>Sprague-Dawley</strain>
        <tissue>Brain</tissue>
    </source>
</reference>
<reference key="3">
    <citation type="journal article" date="2005" name="Hum. Mol. Genet.">
        <title>Sulfatases and sulfatase modifying factors: an exclusive and promiscuous relationship.</title>
        <authorList>
            <person name="Sardiello M."/>
            <person name="Annunziata I."/>
            <person name="Roma G."/>
            <person name="Ballabio A."/>
        </authorList>
    </citation>
    <scope>IDENTIFICATION</scope>
</reference>
<accession>Q32KJ6</accession>
<protein>
    <recommendedName>
        <fullName>N-acetylgalactosamine-6-sulfatase</fullName>
        <ecNumber>3.1.6.4</ecNumber>
    </recommendedName>
    <alternativeName>
        <fullName>Chondroitinsulfatase</fullName>
        <shortName>Chondroitinase</shortName>
    </alternativeName>
    <alternativeName>
        <fullName>Galactose-6-sulfate sulfatase</fullName>
    </alternativeName>
    <alternativeName>
        <fullName>N-acetylgalactosamine-6-sulfate sulfatase</fullName>
        <shortName>GalNAc6S sulfatase</shortName>
    </alternativeName>
</protein>
<name>GALNS_RAT</name>
<sequence length="524" mass="58302">MTACSTAIRAQQLLLPVLSALGLLAAGAPQPPNIVLLLMDDMGWGDLGVYGEPSRETPNLDRMAAEGMLFPSFYSANPLCSPSRAALLTGRLPIRNGFYTTNAHARNAYTPQEIMGGIPNSEHLLPELLKKAGYTNKIVGKWHLGHRPQFHPLKHGFDEWFGSPNCHFGPYDNKVKPNIPVYRDWEMVGRFYEEFPINLKTGEANLTQLYLQEALDFIRTQHARQSPFFLYWAIDATHAPVYASKQFLGTSLRGRYGDAVREIDDSVGKILSLLQNLGISKNTFVFFTSDNGAALISAPKEGGSNGPFLCGKQTTFEGGMREPAIAWWPGHIAAGQVSHQLGSIMDLFTTSLSLAGLKPPSDRVIDGLDLLPTMLQGHIIDRPIFYYRGNTLMAVTLGQYKAHLWTWTNSWEEFRQGIDFCPGQNVSGVTTHTQEEHTELPLIFHLGRDPGERFPLRFTSNEYQDALSRTTQVIQQHQKSLVPGQPQLNVCNQAVMNWAPPGCEKLGKCLTPPESVPEKCFWAH</sequence>
<feature type="signal peptide" evidence="1">
    <location>
        <begin position="1"/>
        <end position="27"/>
    </location>
</feature>
<feature type="chain" id="PRO_0000273150" description="N-acetylgalactosamine-6-sulfatase">
    <location>
        <begin position="28"/>
        <end position="524"/>
    </location>
</feature>
<feature type="region of interest" description="Catalytic domain" evidence="1">
    <location>
        <begin position="28"/>
        <end position="381"/>
    </location>
</feature>
<feature type="active site" description="Nucleophile" evidence="2">
    <location>
        <position position="80"/>
    </location>
</feature>
<feature type="active site" evidence="2">
    <location>
        <position position="143"/>
    </location>
</feature>
<feature type="binding site" evidence="1">
    <location>
        <position position="40"/>
    </location>
    <ligand>
        <name>Ca(2+)</name>
        <dbReference type="ChEBI" id="CHEBI:29108"/>
    </ligand>
</feature>
<feature type="binding site" evidence="1">
    <location>
        <position position="41"/>
    </location>
    <ligand>
        <name>Ca(2+)</name>
        <dbReference type="ChEBI" id="CHEBI:29108"/>
    </ligand>
</feature>
<feature type="binding site" description="via 3-oxoalanine" evidence="1">
    <location>
        <position position="80"/>
    </location>
    <ligand>
        <name>Ca(2+)</name>
        <dbReference type="ChEBI" id="CHEBI:29108"/>
    </ligand>
</feature>
<feature type="binding site" evidence="1">
    <location>
        <position position="290"/>
    </location>
    <ligand>
        <name>Ca(2+)</name>
        <dbReference type="ChEBI" id="CHEBI:29108"/>
    </ligand>
</feature>
<feature type="binding site" evidence="1">
    <location>
        <position position="291"/>
    </location>
    <ligand>
        <name>Ca(2+)</name>
        <dbReference type="ChEBI" id="CHEBI:29108"/>
    </ligand>
</feature>
<feature type="modified residue" description="3-oxoalanine (Cys)" evidence="2">
    <location>
        <position position="80"/>
    </location>
</feature>
<feature type="glycosylation site" description="N-linked (GlcNAc...) asparagine" evidence="3">
    <location>
        <position position="205"/>
    </location>
</feature>
<feature type="glycosylation site" description="N-linked (GlcNAc...) asparagine" evidence="3">
    <location>
        <position position="425"/>
    </location>
</feature>
<feature type="disulfide bond" evidence="1">
    <location>
        <begin position="310"/>
        <end position="421"/>
    </location>
</feature>
<feature type="disulfide bond" evidence="1">
    <location>
        <begin position="491"/>
        <end position="520"/>
    </location>
</feature>
<feature type="disulfide bond" evidence="1">
    <location>
        <begin position="503"/>
        <end position="509"/>
    </location>
</feature>